<proteinExistence type="inferred from homology"/>
<protein>
    <recommendedName>
        <fullName>Hypoxanthine-guanine phosphoribosyltransferase</fullName>
        <shortName>HGPRT</shortName>
        <shortName>HGPRTase</shortName>
        <ecNumber evidence="3">2.4.2.8</ecNumber>
    </recommendedName>
</protein>
<accession>Q8DRP8</accession>
<organism>
    <name type="scientific">Streptococcus pneumoniae (strain ATCC BAA-255 / R6)</name>
    <dbReference type="NCBI Taxonomy" id="171101"/>
    <lineage>
        <taxon>Bacteria</taxon>
        <taxon>Bacillati</taxon>
        <taxon>Bacillota</taxon>
        <taxon>Bacilli</taxon>
        <taxon>Lactobacillales</taxon>
        <taxon>Streptococcaceae</taxon>
        <taxon>Streptococcus</taxon>
    </lineage>
</organism>
<reference key="1">
    <citation type="journal article" date="2001" name="J. Bacteriol.">
        <title>Genome of the bacterium Streptococcus pneumoniae strain R6.</title>
        <authorList>
            <person name="Hoskins J."/>
            <person name="Alborn W.E. Jr."/>
            <person name="Arnold J."/>
            <person name="Blaszczak L.C."/>
            <person name="Burgett S."/>
            <person name="DeHoff B.S."/>
            <person name="Estrem S.T."/>
            <person name="Fritz L."/>
            <person name="Fu D.-J."/>
            <person name="Fuller W."/>
            <person name="Geringer C."/>
            <person name="Gilmour R."/>
            <person name="Glass J.S."/>
            <person name="Khoja H."/>
            <person name="Kraft A.R."/>
            <person name="Lagace R.E."/>
            <person name="LeBlanc D.J."/>
            <person name="Lee L.N."/>
            <person name="Lefkowitz E.J."/>
            <person name="Lu J."/>
            <person name="Matsushima P."/>
            <person name="McAhren S.M."/>
            <person name="McHenney M."/>
            <person name="McLeaster K."/>
            <person name="Mundy C.W."/>
            <person name="Nicas T.I."/>
            <person name="Norris F.H."/>
            <person name="O'Gara M."/>
            <person name="Peery R.B."/>
            <person name="Robertson G.T."/>
            <person name="Rockey P."/>
            <person name="Sun P.-M."/>
            <person name="Winkler M.E."/>
            <person name="Yang Y."/>
            <person name="Young-Bellido M."/>
            <person name="Zhao G."/>
            <person name="Zook C.A."/>
            <person name="Baltz R.H."/>
            <person name="Jaskunas S.R."/>
            <person name="Rosteck P.R. Jr."/>
            <person name="Skatrud P.L."/>
            <person name="Glass J.I."/>
        </authorList>
    </citation>
    <scope>NUCLEOTIDE SEQUENCE [LARGE SCALE GENOMIC DNA]</scope>
    <source>
        <strain>ATCC BAA-255 / R6</strain>
    </source>
</reference>
<keyword id="KW-0963">Cytoplasm</keyword>
<keyword id="KW-0328">Glycosyltransferase</keyword>
<keyword id="KW-0460">Magnesium</keyword>
<keyword id="KW-0479">Metal-binding</keyword>
<keyword id="KW-0547">Nucleotide-binding</keyword>
<keyword id="KW-0660">Purine salvage</keyword>
<keyword id="KW-1185">Reference proteome</keyword>
<keyword id="KW-0808">Transferase</keyword>
<name>HGPRT_STRR6</name>
<gene>
    <name type="primary">hpt</name>
    <name type="ordered locus">spr0011</name>
</gene>
<comment type="function">
    <text evidence="3">Purine salvage pathway enzyme that catalyzes the transfer of the ribosyl-5-phosphate group from 5-phospho-alpha-D-ribose 1-diphosphate (PRPP) to the N9 position of the 6-oxopurines hypoxanthine and guanine to form the corresponding ribonucleotides IMP (inosine 5'-monophosphate) and GMP (guanosine 5'-monophosphate), with the release of PPi.</text>
</comment>
<comment type="catalytic activity">
    <reaction evidence="3">
        <text>IMP + diphosphate = hypoxanthine + 5-phospho-alpha-D-ribose 1-diphosphate</text>
        <dbReference type="Rhea" id="RHEA:17973"/>
        <dbReference type="ChEBI" id="CHEBI:17368"/>
        <dbReference type="ChEBI" id="CHEBI:33019"/>
        <dbReference type="ChEBI" id="CHEBI:58017"/>
        <dbReference type="ChEBI" id="CHEBI:58053"/>
        <dbReference type="EC" id="2.4.2.8"/>
    </reaction>
    <physiologicalReaction direction="right-to-left" evidence="3">
        <dbReference type="Rhea" id="RHEA:17975"/>
    </physiologicalReaction>
</comment>
<comment type="catalytic activity">
    <reaction evidence="3">
        <text>GMP + diphosphate = guanine + 5-phospho-alpha-D-ribose 1-diphosphate</text>
        <dbReference type="Rhea" id="RHEA:25424"/>
        <dbReference type="ChEBI" id="CHEBI:16235"/>
        <dbReference type="ChEBI" id="CHEBI:33019"/>
        <dbReference type="ChEBI" id="CHEBI:58017"/>
        <dbReference type="ChEBI" id="CHEBI:58115"/>
        <dbReference type="EC" id="2.4.2.8"/>
    </reaction>
    <physiologicalReaction direction="right-to-left" evidence="3">
        <dbReference type="Rhea" id="RHEA:25426"/>
    </physiologicalReaction>
</comment>
<comment type="cofactor">
    <cofactor evidence="3">
        <name>Mg(2+)</name>
        <dbReference type="ChEBI" id="CHEBI:18420"/>
    </cofactor>
</comment>
<comment type="pathway">
    <text evidence="3">Purine metabolism; IMP biosynthesis via salvage pathway; IMP from hypoxanthine: step 1/1.</text>
</comment>
<comment type="pathway">
    <text evidence="3">Purine metabolism; GMP biosynthesis via salvage pathway; GMP from guanine: step 1/1.</text>
</comment>
<comment type="subcellular location">
    <subcellularLocation>
        <location evidence="1">Cytoplasm</location>
    </subcellularLocation>
</comment>
<comment type="similarity">
    <text evidence="4">Belongs to the purine/pyrimidine phosphoribosyltransferase family.</text>
</comment>
<evidence type="ECO:0000250" key="1"/>
<evidence type="ECO:0000250" key="2">
    <source>
        <dbReference type="UniProtKB" id="P0A9M2"/>
    </source>
</evidence>
<evidence type="ECO:0000250" key="3">
    <source>
        <dbReference type="UniProtKB" id="P9WHQ9"/>
    </source>
</evidence>
<evidence type="ECO:0000305" key="4"/>
<dbReference type="EC" id="2.4.2.8" evidence="3"/>
<dbReference type="EMBL" id="AE007317">
    <property type="protein sequence ID" value="AAK98815.1"/>
    <property type="molecule type" value="Genomic_DNA"/>
</dbReference>
<dbReference type="PIR" id="C97873">
    <property type="entry name" value="C97873"/>
</dbReference>
<dbReference type="PIR" id="D95001">
    <property type="entry name" value="D95001"/>
</dbReference>
<dbReference type="RefSeq" id="NP_357605.1">
    <property type="nucleotide sequence ID" value="NC_003098.1"/>
</dbReference>
<dbReference type="RefSeq" id="WP_000892185.1">
    <property type="nucleotide sequence ID" value="NC_003098.1"/>
</dbReference>
<dbReference type="SMR" id="Q8DRP8"/>
<dbReference type="STRING" id="171101.spr0011"/>
<dbReference type="KEGG" id="spr:spr0011"/>
<dbReference type="PATRIC" id="fig|171101.6.peg.12"/>
<dbReference type="eggNOG" id="COG0634">
    <property type="taxonomic scope" value="Bacteria"/>
</dbReference>
<dbReference type="HOGENOM" id="CLU_073615_0_0_9"/>
<dbReference type="UniPathway" id="UPA00591">
    <property type="reaction ID" value="UER00648"/>
</dbReference>
<dbReference type="UniPathway" id="UPA00909">
    <property type="reaction ID" value="UER00887"/>
</dbReference>
<dbReference type="Proteomes" id="UP000000586">
    <property type="component" value="Chromosome"/>
</dbReference>
<dbReference type="GO" id="GO:0005829">
    <property type="term" value="C:cytosol"/>
    <property type="evidence" value="ECO:0000318"/>
    <property type="project" value="GO_Central"/>
</dbReference>
<dbReference type="GO" id="GO:0052657">
    <property type="term" value="F:guanine phosphoribosyltransferase activity"/>
    <property type="evidence" value="ECO:0007669"/>
    <property type="project" value="RHEA"/>
</dbReference>
<dbReference type="GO" id="GO:0004422">
    <property type="term" value="F:hypoxanthine phosphoribosyltransferase activity"/>
    <property type="evidence" value="ECO:0000318"/>
    <property type="project" value="GO_Central"/>
</dbReference>
<dbReference type="GO" id="GO:0000287">
    <property type="term" value="F:magnesium ion binding"/>
    <property type="evidence" value="ECO:0000318"/>
    <property type="project" value="GO_Central"/>
</dbReference>
<dbReference type="GO" id="GO:0000166">
    <property type="term" value="F:nucleotide binding"/>
    <property type="evidence" value="ECO:0007669"/>
    <property type="project" value="UniProtKB-KW"/>
</dbReference>
<dbReference type="GO" id="GO:0032263">
    <property type="term" value="P:GMP salvage"/>
    <property type="evidence" value="ECO:0000318"/>
    <property type="project" value="GO_Central"/>
</dbReference>
<dbReference type="GO" id="GO:0006178">
    <property type="term" value="P:guanine salvage"/>
    <property type="evidence" value="ECO:0000318"/>
    <property type="project" value="GO_Central"/>
</dbReference>
<dbReference type="GO" id="GO:0046100">
    <property type="term" value="P:hypoxanthine metabolic process"/>
    <property type="evidence" value="ECO:0000318"/>
    <property type="project" value="GO_Central"/>
</dbReference>
<dbReference type="GO" id="GO:0032264">
    <property type="term" value="P:IMP salvage"/>
    <property type="evidence" value="ECO:0000318"/>
    <property type="project" value="GO_Central"/>
</dbReference>
<dbReference type="GO" id="GO:0006166">
    <property type="term" value="P:purine ribonucleoside salvage"/>
    <property type="evidence" value="ECO:0007669"/>
    <property type="project" value="UniProtKB-KW"/>
</dbReference>
<dbReference type="CDD" id="cd06223">
    <property type="entry name" value="PRTases_typeI"/>
    <property type="match status" value="1"/>
</dbReference>
<dbReference type="FunFam" id="3.40.50.2020:FF:000006">
    <property type="entry name" value="Hypoxanthine phosphoribosyltransferase"/>
    <property type="match status" value="1"/>
</dbReference>
<dbReference type="Gene3D" id="3.40.50.2020">
    <property type="match status" value="1"/>
</dbReference>
<dbReference type="InterPro" id="IPR050408">
    <property type="entry name" value="HGPRT"/>
</dbReference>
<dbReference type="InterPro" id="IPR005904">
    <property type="entry name" value="Hxn_phspho_trans"/>
</dbReference>
<dbReference type="InterPro" id="IPR000836">
    <property type="entry name" value="PRibTrfase_dom"/>
</dbReference>
<dbReference type="InterPro" id="IPR029057">
    <property type="entry name" value="PRTase-like"/>
</dbReference>
<dbReference type="NCBIfam" id="TIGR01203">
    <property type="entry name" value="HGPRTase"/>
    <property type="match status" value="1"/>
</dbReference>
<dbReference type="PANTHER" id="PTHR43340:SF1">
    <property type="entry name" value="HYPOXANTHINE PHOSPHORIBOSYLTRANSFERASE"/>
    <property type="match status" value="1"/>
</dbReference>
<dbReference type="PANTHER" id="PTHR43340">
    <property type="entry name" value="HYPOXANTHINE-GUANINE PHOSPHORIBOSYLTRANSFERASE"/>
    <property type="match status" value="1"/>
</dbReference>
<dbReference type="Pfam" id="PF00156">
    <property type="entry name" value="Pribosyltran"/>
    <property type="match status" value="1"/>
</dbReference>
<dbReference type="SUPFAM" id="SSF53271">
    <property type="entry name" value="PRTase-like"/>
    <property type="match status" value="1"/>
</dbReference>
<sequence length="180" mass="20212">MLENDIKKVLVSHDEITEAAKKLGAQLTKDYAGKNPILVGILKGSIPFMAELVKHIDTHIEMDFMMVSSYHGGTASSGVINIKQDVTQDIKGRHVLFVEDIIDTGQTLKNLRDMFKEREAASVKIATLLDKPEGRVVEIEADYTCFTIPNEFVVGYGLDYKENYRNLPYIGVLKEEVYSN</sequence>
<feature type="chain" id="PRO_0000139624" description="Hypoxanthine-guanine phosphoribosyltransferase">
    <location>
        <begin position="1"/>
        <end position="180"/>
    </location>
</feature>
<feature type="active site" description="Proton acceptor" evidence="2">
    <location>
        <position position="103"/>
    </location>
</feature>
<feature type="binding site" evidence="3">
    <location>
        <position position="43"/>
    </location>
    <ligand>
        <name>diphosphate</name>
        <dbReference type="ChEBI" id="CHEBI:33019"/>
    </ligand>
</feature>
<feature type="binding site" evidence="3">
    <location>
        <position position="44"/>
    </location>
    <ligand>
        <name>diphosphate</name>
        <dbReference type="ChEBI" id="CHEBI:33019"/>
    </ligand>
</feature>
<feature type="binding site" evidence="3">
    <location>
        <position position="99"/>
    </location>
    <ligand>
        <name>Mg(2+)</name>
        <dbReference type="ChEBI" id="CHEBI:18420"/>
    </ligand>
</feature>
<feature type="binding site" evidence="3">
    <location>
        <position position="100"/>
    </location>
    <ligand>
        <name>Mg(2+)</name>
        <dbReference type="ChEBI" id="CHEBI:18420"/>
    </ligand>
</feature>
<feature type="binding site" evidence="3">
    <location>
        <position position="131"/>
    </location>
    <ligand>
        <name>GMP</name>
        <dbReference type="ChEBI" id="CHEBI:58115"/>
    </ligand>
</feature>
<feature type="binding site" evidence="3">
    <location>
        <begin position="152"/>
        <end position="153"/>
    </location>
    <ligand>
        <name>GMP</name>
        <dbReference type="ChEBI" id="CHEBI:58115"/>
    </ligand>
</feature>
<feature type="binding site" evidence="3">
    <location>
        <position position="159"/>
    </location>
    <ligand>
        <name>GMP</name>
        <dbReference type="ChEBI" id="CHEBI:58115"/>
    </ligand>
</feature>
<feature type="binding site" evidence="3">
    <location>
        <position position="165"/>
    </location>
    <ligand>
        <name>diphosphate</name>
        <dbReference type="ChEBI" id="CHEBI:33019"/>
    </ligand>
</feature>